<comment type="similarity">
    <text evidence="1">Belongs to the UPF0178 family.</text>
</comment>
<feature type="chain" id="PRO_1000197823" description="UPF0178 protein BAMEG_1545">
    <location>
        <begin position="1"/>
        <end position="146"/>
    </location>
</feature>
<dbReference type="EMBL" id="CP001215">
    <property type="protein sequence ID" value="ACP15545.1"/>
    <property type="molecule type" value="Genomic_DNA"/>
</dbReference>
<dbReference type="RefSeq" id="WP_000708743.1">
    <property type="nucleotide sequence ID" value="NC_012581.1"/>
</dbReference>
<dbReference type="KEGG" id="bah:BAMEG_1545"/>
<dbReference type="HOGENOM" id="CLU_106619_0_0_9"/>
<dbReference type="HAMAP" id="MF_00489">
    <property type="entry name" value="UPF0178"/>
    <property type="match status" value="1"/>
</dbReference>
<dbReference type="InterPro" id="IPR003791">
    <property type="entry name" value="UPF0178"/>
</dbReference>
<dbReference type="NCBIfam" id="NF001095">
    <property type="entry name" value="PRK00124.1"/>
    <property type="match status" value="1"/>
</dbReference>
<dbReference type="PANTHER" id="PTHR35146">
    <property type="entry name" value="UPF0178 PROTEIN YAII"/>
    <property type="match status" value="1"/>
</dbReference>
<dbReference type="PANTHER" id="PTHR35146:SF1">
    <property type="entry name" value="UPF0178 PROTEIN YAII"/>
    <property type="match status" value="1"/>
</dbReference>
<dbReference type="Pfam" id="PF02639">
    <property type="entry name" value="DUF188"/>
    <property type="match status" value="1"/>
</dbReference>
<proteinExistence type="inferred from homology"/>
<name>Y1545_BACAC</name>
<evidence type="ECO:0000255" key="1">
    <source>
        <dbReference type="HAMAP-Rule" id="MF_00489"/>
    </source>
</evidence>
<gene>
    <name type="ordered locus">BAMEG_1545</name>
</gene>
<protein>
    <recommendedName>
        <fullName evidence="1">UPF0178 protein BAMEG_1545</fullName>
    </recommendedName>
</protein>
<accession>C3LEQ2</accession>
<sequence length="146" mass="16336">MKIYVDADACPVKDVIIFEATKAEIPVILVTSFSHYSNAEQPKGVETIYVDSGADAADYRIMQLAQKEDLIVTQDYGLASLALAKGCIVLHHKGYKYTNENIEQLLQTRYLSAMVRKSGKRTKGPKPFTAEDKEKFRALFKSMIAL</sequence>
<reference key="1">
    <citation type="submission" date="2008-10" db="EMBL/GenBank/DDBJ databases">
        <title>Genome sequence of Bacillus anthracis str. CDC 684.</title>
        <authorList>
            <person name="Dodson R.J."/>
            <person name="Munk A.C."/>
            <person name="Brettin T."/>
            <person name="Bruce D."/>
            <person name="Detter C."/>
            <person name="Tapia R."/>
            <person name="Han C."/>
            <person name="Sutton G."/>
            <person name="Sims D."/>
        </authorList>
    </citation>
    <scope>NUCLEOTIDE SEQUENCE [LARGE SCALE GENOMIC DNA]</scope>
    <source>
        <strain>CDC 684 / NRRL 3495</strain>
    </source>
</reference>
<organism>
    <name type="scientific">Bacillus anthracis (strain CDC 684 / NRRL 3495)</name>
    <dbReference type="NCBI Taxonomy" id="568206"/>
    <lineage>
        <taxon>Bacteria</taxon>
        <taxon>Bacillati</taxon>
        <taxon>Bacillota</taxon>
        <taxon>Bacilli</taxon>
        <taxon>Bacillales</taxon>
        <taxon>Bacillaceae</taxon>
        <taxon>Bacillus</taxon>
        <taxon>Bacillus cereus group</taxon>
    </lineage>
</organism>